<evidence type="ECO:0000255" key="1">
    <source>
        <dbReference type="HAMAP-Rule" id="MF_00019"/>
    </source>
</evidence>
<protein>
    <recommendedName>
        <fullName evidence="1">Phosphate acyltransferase</fullName>
        <ecNumber evidence="1">2.3.1.274</ecNumber>
    </recommendedName>
    <alternativeName>
        <fullName evidence="1">Acyl-ACP phosphotransacylase</fullName>
    </alternativeName>
    <alternativeName>
        <fullName evidence="1">Acyl-[acyl-carrier-protein]--phosphate acyltransferase</fullName>
    </alternativeName>
    <alternativeName>
        <fullName evidence="1">Phosphate-acyl-ACP acyltransferase</fullName>
    </alternativeName>
</protein>
<keyword id="KW-0963">Cytoplasm</keyword>
<keyword id="KW-0444">Lipid biosynthesis</keyword>
<keyword id="KW-0443">Lipid metabolism</keyword>
<keyword id="KW-0594">Phospholipid biosynthesis</keyword>
<keyword id="KW-1208">Phospholipid metabolism</keyword>
<keyword id="KW-1185">Reference proteome</keyword>
<keyword id="KW-0808">Transferase</keyword>
<proteinExistence type="inferred from homology"/>
<sequence>MIRIALDLMGGDRAPEEIKAGALMYLQNVKKTGRKVQLVLVGLADTLKEFEHFKSEGLVELVEAQEALPMDVKPTDALRRKNSSMYIASQLVKEKKAEAIVSAGNTGALLSCATLVVGRLPGVDRPALAVPVPSLNDFTILIDAGANAEVKHEWLIQFAAMGIEYAKILGKRNPKVGLLNVGTEENKGTELEKQAYQLLKQAFNESFYGNVEGNDINIGTVDVVVTNGFSGNIAMKTMEGVAKLISHTIKQEAKKSLDGILGALLFSRTLKKLKKKLDPRTYGGSFFLGVDGIVVKAHGNSDRIAIYNAIDVAVRGVEGKLVEQLNERLKVYNK</sequence>
<feature type="chain" id="PRO_1000070989" description="Phosphate acyltransferase">
    <location>
        <begin position="1"/>
        <end position="334"/>
    </location>
</feature>
<reference key="1">
    <citation type="submission" date="2007-07" db="EMBL/GenBank/DDBJ databases">
        <title>Complete sequence of Fervidobacterium nodosum Rt17-B1.</title>
        <authorList>
            <consortium name="US DOE Joint Genome Institute"/>
            <person name="Copeland A."/>
            <person name="Lucas S."/>
            <person name="Lapidus A."/>
            <person name="Barry K."/>
            <person name="Glavina del Rio T."/>
            <person name="Dalin E."/>
            <person name="Tice H."/>
            <person name="Pitluck S."/>
            <person name="Saunders E."/>
            <person name="Brettin T."/>
            <person name="Bruce D."/>
            <person name="Detter J.C."/>
            <person name="Han C."/>
            <person name="Schmutz J."/>
            <person name="Larimer F."/>
            <person name="Land M."/>
            <person name="Hauser L."/>
            <person name="Kyrpides N."/>
            <person name="Mikhailova N."/>
            <person name="Nelson K."/>
            <person name="Gogarten J.P."/>
            <person name="Noll K."/>
            <person name="Richardson P."/>
        </authorList>
    </citation>
    <scope>NUCLEOTIDE SEQUENCE [LARGE SCALE GENOMIC DNA]</scope>
    <source>
        <strain>ATCC 35602 / DSM 5306 / Rt17-B1</strain>
    </source>
</reference>
<organism>
    <name type="scientific">Fervidobacterium nodosum (strain ATCC 35602 / DSM 5306 / Rt17-B1)</name>
    <dbReference type="NCBI Taxonomy" id="381764"/>
    <lineage>
        <taxon>Bacteria</taxon>
        <taxon>Thermotogati</taxon>
        <taxon>Thermotogota</taxon>
        <taxon>Thermotogae</taxon>
        <taxon>Thermotogales</taxon>
        <taxon>Fervidobacteriaceae</taxon>
        <taxon>Fervidobacterium</taxon>
    </lineage>
</organism>
<comment type="function">
    <text evidence="1">Catalyzes the reversible formation of acyl-phosphate (acyl-PO(4)) from acyl-[acyl-carrier-protein] (acyl-ACP). This enzyme utilizes acyl-ACP as fatty acyl donor, but not acyl-CoA.</text>
</comment>
<comment type="catalytic activity">
    <reaction evidence="1">
        <text>a fatty acyl-[ACP] + phosphate = an acyl phosphate + holo-[ACP]</text>
        <dbReference type="Rhea" id="RHEA:42292"/>
        <dbReference type="Rhea" id="RHEA-COMP:9685"/>
        <dbReference type="Rhea" id="RHEA-COMP:14125"/>
        <dbReference type="ChEBI" id="CHEBI:43474"/>
        <dbReference type="ChEBI" id="CHEBI:59918"/>
        <dbReference type="ChEBI" id="CHEBI:64479"/>
        <dbReference type="ChEBI" id="CHEBI:138651"/>
        <dbReference type="EC" id="2.3.1.274"/>
    </reaction>
</comment>
<comment type="pathway">
    <text evidence="1">Lipid metabolism; phospholipid metabolism.</text>
</comment>
<comment type="subunit">
    <text evidence="1">Homodimer. Probably interacts with PlsY.</text>
</comment>
<comment type="subcellular location">
    <subcellularLocation>
        <location evidence="1">Cytoplasm</location>
    </subcellularLocation>
    <text evidence="1">Associated with the membrane possibly through PlsY.</text>
</comment>
<comment type="similarity">
    <text evidence="1">Belongs to the PlsX family.</text>
</comment>
<accession>A7HLA7</accession>
<name>PLSX_FERNB</name>
<gene>
    <name evidence="1" type="primary">plsX</name>
    <name type="ordered locus">Fnod_0837</name>
</gene>
<dbReference type="EC" id="2.3.1.274" evidence="1"/>
<dbReference type="EMBL" id="CP000771">
    <property type="protein sequence ID" value="ABS60690.1"/>
    <property type="molecule type" value="Genomic_DNA"/>
</dbReference>
<dbReference type="RefSeq" id="WP_011994006.1">
    <property type="nucleotide sequence ID" value="NC_009718.1"/>
</dbReference>
<dbReference type="SMR" id="A7HLA7"/>
<dbReference type="STRING" id="381764.Fnod_0837"/>
<dbReference type="KEGG" id="fno:Fnod_0837"/>
<dbReference type="eggNOG" id="COG0416">
    <property type="taxonomic scope" value="Bacteria"/>
</dbReference>
<dbReference type="HOGENOM" id="CLU_039379_1_1_0"/>
<dbReference type="OrthoDB" id="9806408at2"/>
<dbReference type="UniPathway" id="UPA00085"/>
<dbReference type="Proteomes" id="UP000002415">
    <property type="component" value="Chromosome"/>
</dbReference>
<dbReference type="GO" id="GO:0005737">
    <property type="term" value="C:cytoplasm"/>
    <property type="evidence" value="ECO:0007669"/>
    <property type="project" value="UniProtKB-SubCell"/>
</dbReference>
<dbReference type="GO" id="GO:0043811">
    <property type="term" value="F:phosphate:acyl-[acyl carrier protein] acyltransferase activity"/>
    <property type="evidence" value="ECO:0007669"/>
    <property type="project" value="UniProtKB-UniRule"/>
</dbReference>
<dbReference type="GO" id="GO:0006633">
    <property type="term" value="P:fatty acid biosynthetic process"/>
    <property type="evidence" value="ECO:0007669"/>
    <property type="project" value="UniProtKB-UniRule"/>
</dbReference>
<dbReference type="GO" id="GO:0008654">
    <property type="term" value="P:phospholipid biosynthetic process"/>
    <property type="evidence" value="ECO:0007669"/>
    <property type="project" value="UniProtKB-KW"/>
</dbReference>
<dbReference type="Gene3D" id="3.40.718.10">
    <property type="entry name" value="Isopropylmalate Dehydrogenase"/>
    <property type="match status" value="1"/>
</dbReference>
<dbReference type="HAMAP" id="MF_00019">
    <property type="entry name" value="PlsX"/>
    <property type="match status" value="1"/>
</dbReference>
<dbReference type="InterPro" id="IPR003664">
    <property type="entry name" value="FA_synthesis"/>
</dbReference>
<dbReference type="InterPro" id="IPR012281">
    <property type="entry name" value="Phospholipid_synth_PlsX-like"/>
</dbReference>
<dbReference type="NCBIfam" id="TIGR00182">
    <property type="entry name" value="plsX"/>
    <property type="match status" value="1"/>
</dbReference>
<dbReference type="PANTHER" id="PTHR30100">
    <property type="entry name" value="FATTY ACID/PHOSPHOLIPID SYNTHESIS PROTEIN PLSX"/>
    <property type="match status" value="1"/>
</dbReference>
<dbReference type="PANTHER" id="PTHR30100:SF1">
    <property type="entry name" value="PHOSPHATE ACYLTRANSFERASE"/>
    <property type="match status" value="1"/>
</dbReference>
<dbReference type="Pfam" id="PF02504">
    <property type="entry name" value="FA_synthesis"/>
    <property type="match status" value="1"/>
</dbReference>
<dbReference type="PIRSF" id="PIRSF002465">
    <property type="entry name" value="Phsphlp_syn_PlsX"/>
    <property type="match status" value="1"/>
</dbReference>
<dbReference type="SUPFAM" id="SSF53659">
    <property type="entry name" value="Isocitrate/Isopropylmalate dehydrogenase-like"/>
    <property type="match status" value="1"/>
</dbReference>